<comment type="function">
    <text evidence="1">With S4 and S12 plays an important role in translational accuracy.</text>
</comment>
<comment type="function">
    <text evidence="1">Located at the back of the 30S subunit body where it stabilizes the conformation of the head with respect to the body.</text>
</comment>
<comment type="subunit">
    <text evidence="1">Part of the 30S ribosomal subunit. Contacts proteins S4 and S8.</text>
</comment>
<comment type="domain">
    <text>The N-terminal domain interacts with the head of the 30S subunit; the C-terminal domain interacts with the body and contacts protein S4. The interaction surface between S4 and S5 is involved in control of translational fidelity.</text>
</comment>
<comment type="similarity">
    <text evidence="1">Belongs to the universal ribosomal protein uS5 family.</text>
</comment>
<reference key="1">
    <citation type="journal article" date="2003" name="Proc. Natl. Acad. Sci. U.S.A.">
        <title>The complete genome sequence of the carcinogenic bacterium Helicobacter hepaticus.</title>
        <authorList>
            <person name="Suerbaum S."/>
            <person name="Josenhans C."/>
            <person name="Sterzenbach T."/>
            <person name="Drescher B."/>
            <person name="Brandt P."/>
            <person name="Bell M."/>
            <person name="Droege M."/>
            <person name="Fartmann B."/>
            <person name="Fischer H.-P."/>
            <person name="Ge Z."/>
            <person name="Hoerster A."/>
            <person name="Holland R."/>
            <person name="Klein K."/>
            <person name="Koenig J."/>
            <person name="Macko L."/>
            <person name="Mendz G.L."/>
            <person name="Nyakatura G."/>
            <person name="Schauer D.B."/>
            <person name="Shen Z."/>
            <person name="Weber J."/>
            <person name="Frosch M."/>
            <person name="Fox J.G."/>
        </authorList>
    </citation>
    <scope>NUCLEOTIDE SEQUENCE [LARGE SCALE GENOMIC DNA]</scope>
    <source>
        <strain>ATCC 51449 / 3B1</strain>
    </source>
</reference>
<feature type="chain" id="PRO_0000131524" description="Small ribosomal subunit protein uS5">
    <location>
        <begin position="1"/>
        <end position="146"/>
    </location>
</feature>
<feature type="domain" description="S5 DRBM" evidence="1">
    <location>
        <begin position="8"/>
        <end position="71"/>
    </location>
</feature>
<protein>
    <recommendedName>
        <fullName evidence="1">Small ribosomal subunit protein uS5</fullName>
    </recommendedName>
    <alternativeName>
        <fullName evidence="2">30S ribosomal protein S5</fullName>
    </alternativeName>
</protein>
<accession>Q7VGC7</accession>
<evidence type="ECO:0000255" key="1">
    <source>
        <dbReference type="HAMAP-Rule" id="MF_01307"/>
    </source>
</evidence>
<evidence type="ECO:0000305" key="2"/>
<sequence length="146" mass="15677">MEINREEFSEVVVNIGRVTKVVKGGRRFRFNALVVVGNKNGLVGFGLGKAKEVPDAIKKAIDDAFKNIIKVNIKGTTIAHDIEHKYNASRILLKPASEGTGVIAGGSTRPVIELAGIKDILTKSLGSNNPYNVVRATIDALARIKA</sequence>
<gene>
    <name evidence="1" type="primary">rpsE</name>
    <name type="ordered locus">HH_1395</name>
</gene>
<dbReference type="EMBL" id="AE017125">
    <property type="protein sequence ID" value="AAP77992.1"/>
    <property type="molecule type" value="Genomic_DNA"/>
</dbReference>
<dbReference type="RefSeq" id="WP_011116235.1">
    <property type="nucleotide sequence ID" value="NC_004917.1"/>
</dbReference>
<dbReference type="SMR" id="Q7VGC7"/>
<dbReference type="STRING" id="235279.HH_1395"/>
<dbReference type="KEGG" id="hhe:HH_1395"/>
<dbReference type="eggNOG" id="COG0098">
    <property type="taxonomic scope" value="Bacteria"/>
</dbReference>
<dbReference type="HOGENOM" id="CLU_065898_2_2_7"/>
<dbReference type="OrthoDB" id="9809045at2"/>
<dbReference type="Proteomes" id="UP000002495">
    <property type="component" value="Chromosome"/>
</dbReference>
<dbReference type="GO" id="GO:0015935">
    <property type="term" value="C:small ribosomal subunit"/>
    <property type="evidence" value="ECO:0007669"/>
    <property type="project" value="InterPro"/>
</dbReference>
<dbReference type="GO" id="GO:0019843">
    <property type="term" value="F:rRNA binding"/>
    <property type="evidence" value="ECO:0007669"/>
    <property type="project" value="UniProtKB-UniRule"/>
</dbReference>
<dbReference type="GO" id="GO:0003735">
    <property type="term" value="F:structural constituent of ribosome"/>
    <property type="evidence" value="ECO:0007669"/>
    <property type="project" value="InterPro"/>
</dbReference>
<dbReference type="GO" id="GO:0006412">
    <property type="term" value="P:translation"/>
    <property type="evidence" value="ECO:0007669"/>
    <property type="project" value="UniProtKB-UniRule"/>
</dbReference>
<dbReference type="FunFam" id="3.30.160.20:FF:000001">
    <property type="entry name" value="30S ribosomal protein S5"/>
    <property type="match status" value="1"/>
</dbReference>
<dbReference type="FunFam" id="3.30.230.10:FF:000024">
    <property type="entry name" value="30S ribosomal protein S5"/>
    <property type="match status" value="1"/>
</dbReference>
<dbReference type="Gene3D" id="3.30.160.20">
    <property type="match status" value="1"/>
</dbReference>
<dbReference type="Gene3D" id="3.30.230.10">
    <property type="match status" value="1"/>
</dbReference>
<dbReference type="HAMAP" id="MF_01307_B">
    <property type="entry name" value="Ribosomal_uS5_B"/>
    <property type="match status" value="1"/>
</dbReference>
<dbReference type="InterPro" id="IPR020568">
    <property type="entry name" value="Ribosomal_Su5_D2-typ_SF"/>
</dbReference>
<dbReference type="InterPro" id="IPR000851">
    <property type="entry name" value="Ribosomal_uS5"/>
</dbReference>
<dbReference type="InterPro" id="IPR005712">
    <property type="entry name" value="Ribosomal_uS5_bac-type"/>
</dbReference>
<dbReference type="InterPro" id="IPR005324">
    <property type="entry name" value="Ribosomal_uS5_C"/>
</dbReference>
<dbReference type="InterPro" id="IPR013810">
    <property type="entry name" value="Ribosomal_uS5_N"/>
</dbReference>
<dbReference type="InterPro" id="IPR018192">
    <property type="entry name" value="Ribosomal_uS5_N_CS"/>
</dbReference>
<dbReference type="InterPro" id="IPR014721">
    <property type="entry name" value="Ribsml_uS5_D2-typ_fold_subgr"/>
</dbReference>
<dbReference type="NCBIfam" id="TIGR01021">
    <property type="entry name" value="rpsE_bact"/>
    <property type="match status" value="1"/>
</dbReference>
<dbReference type="PANTHER" id="PTHR48277">
    <property type="entry name" value="MITOCHONDRIAL RIBOSOMAL PROTEIN S5"/>
    <property type="match status" value="1"/>
</dbReference>
<dbReference type="PANTHER" id="PTHR48277:SF1">
    <property type="entry name" value="MITOCHONDRIAL RIBOSOMAL PROTEIN S5"/>
    <property type="match status" value="1"/>
</dbReference>
<dbReference type="Pfam" id="PF00333">
    <property type="entry name" value="Ribosomal_S5"/>
    <property type="match status" value="1"/>
</dbReference>
<dbReference type="Pfam" id="PF03719">
    <property type="entry name" value="Ribosomal_S5_C"/>
    <property type="match status" value="1"/>
</dbReference>
<dbReference type="SUPFAM" id="SSF54768">
    <property type="entry name" value="dsRNA-binding domain-like"/>
    <property type="match status" value="1"/>
</dbReference>
<dbReference type="SUPFAM" id="SSF54211">
    <property type="entry name" value="Ribosomal protein S5 domain 2-like"/>
    <property type="match status" value="1"/>
</dbReference>
<dbReference type="PROSITE" id="PS00585">
    <property type="entry name" value="RIBOSOMAL_S5"/>
    <property type="match status" value="1"/>
</dbReference>
<dbReference type="PROSITE" id="PS50881">
    <property type="entry name" value="S5_DSRBD"/>
    <property type="match status" value="1"/>
</dbReference>
<name>RS5_HELHP</name>
<organism>
    <name type="scientific">Helicobacter hepaticus (strain ATCC 51449 / 3B1)</name>
    <dbReference type="NCBI Taxonomy" id="235279"/>
    <lineage>
        <taxon>Bacteria</taxon>
        <taxon>Pseudomonadati</taxon>
        <taxon>Campylobacterota</taxon>
        <taxon>Epsilonproteobacteria</taxon>
        <taxon>Campylobacterales</taxon>
        <taxon>Helicobacteraceae</taxon>
        <taxon>Helicobacter</taxon>
    </lineage>
</organism>
<proteinExistence type="inferred from homology"/>
<keyword id="KW-1185">Reference proteome</keyword>
<keyword id="KW-0687">Ribonucleoprotein</keyword>
<keyword id="KW-0689">Ribosomal protein</keyword>
<keyword id="KW-0694">RNA-binding</keyword>
<keyword id="KW-0699">rRNA-binding</keyword>